<protein>
    <recommendedName>
        <fullName evidence="1">Co-chaperonin GroES</fullName>
    </recommendedName>
    <alternativeName>
        <fullName evidence="1">10 kDa chaperonin</fullName>
    </alternativeName>
    <alternativeName>
        <fullName evidence="1">Chaperonin-10</fullName>
        <shortName evidence="1">Cpn10</shortName>
    </alternativeName>
</protein>
<accession>Q820G1</accession>
<evidence type="ECO:0000255" key="1">
    <source>
        <dbReference type="HAMAP-Rule" id="MF_00580"/>
    </source>
</evidence>
<comment type="function">
    <text evidence="1">Together with the chaperonin GroEL, plays an essential role in assisting protein folding. The GroEL-GroES system forms a nano-cage that allows encapsulation of the non-native substrate proteins and provides a physical environment optimized to promote and accelerate protein folding. GroES binds to the apical surface of the GroEL ring, thereby capping the opening of the GroEL channel.</text>
</comment>
<comment type="subunit">
    <text evidence="1">Heptamer of 7 subunits arranged in a ring. Interacts with the chaperonin GroEL.</text>
</comment>
<comment type="subcellular location">
    <subcellularLocation>
        <location evidence="1">Cytoplasm</location>
    </subcellularLocation>
</comment>
<comment type="similarity">
    <text evidence="1">Belongs to the GroES chaperonin family.</text>
</comment>
<dbReference type="EMBL" id="BA000030">
    <property type="protein sequence ID" value="BAC72703.1"/>
    <property type="molecule type" value="Genomic_DNA"/>
</dbReference>
<dbReference type="RefSeq" id="WP_010986397.1">
    <property type="nucleotide sequence ID" value="NZ_JZJK01000077.1"/>
</dbReference>
<dbReference type="SMR" id="Q820G1"/>
<dbReference type="GeneID" id="97358063"/>
<dbReference type="KEGG" id="sma:SAVERM_4991"/>
<dbReference type="eggNOG" id="COG0234">
    <property type="taxonomic scope" value="Bacteria"/>
</dbReference>
<dbReference type="HOGENOM" id="CLU_132825_2_0_11"/>
<dbReference type="OrthoDB" id="9806791at2"/>
<dbReference type="Proteomes" id="UP000000428">
    <property type="component" value="Chromosome"/>
</dbReference>
<dbReference type="GO" id="GO:0005737">
    <property type="term" value="C:cytoplasm"/>
    <property type="evidence" value="ECO:0007669"/>
    <property type="project" value="UniProtKB-SubCell"/>
</dbReference>
<dbReference type="GO" id="GO:0005524">
    <property type="term" value="F:ATP binding"/>
    <property type="evidence" value="ECO:0007669"/>
    <property type="project" value="InterPro"/>
</dbReference>
<dbReference type="GO" id="GO:0046872">
    <property type="term" value="F:metal ion binding"/>
    <property type="evidence" value="ECO:0007669"/>
    <property type="project" value="TreeGrafter"/>
</dbReference>
<dbReference type="GO" id="GO:0044183">
    <property type="term" value="F:protein folding chaperone"/>
    <property type="evidence" value="ECO:0007669"/>
    <property type="project" value="InterPro"/>
</dbReference>
<dbReference type="GO" id="GO:0051087">
    <property type="term" value="F:protein-folding chaperone binding"/>
    <property type="evidence" value="ECO:0007669"/>
    <property type="project" value="TreeGrafter"/>
</dbReference>
<dbReference type="GO" id="GO:0051082">
    <property type="term" value="F:unfolded protein binding"/>
    <property type="evidence" value="ECO:0007669"/>
    <property type="project" value="TreeGrafter"/>
</dbReference>
<dbReference type="GO" id="GO:0051085">
    <property type="term" value="P:chaperone cofactor-dependent protein refolding"/>
    <property type="evidence" value="ECO:0007669"/>
    <property type="project" value="TreeGrafter"/>
</dbReference>
<dbReference type="CDD" id="cd00320">
    <property type="entry name" value="cpn10"/>
    <property type="match status" value="1"/>
</dbReference>
<dbReference type="FunFam" id="2.30.33.40:FF:000001">
    <property type="entry name" value="10 kDa chaperonin"/>
    <property type="match status" value="1"/>
</dbReference>
<dbReference type="Gene3D" id="2.30.33.40">
    <property type="entry name" value="GroES chaperonin"/>
    <property type="match status" value="1"/>
</dbReference>
<dbReference type="HAMAP" id="MF_00580">
    <property type="entry name" value="CH10"/>
    <property type="match status" value="1"/>
</dbReference>
<dbReference type="InterPro" id="IPR020818">
    <property type="entry name" value="Chaperonin_GroES"/>
</dbReference>
<dbReference type="InterPro" id="IPR037124">
    <property type="entry name" value="Chaperonin_GroES_sf"/>
</dbReference>
<dbReference type="InterPro" id="IPR018369">
    <property type="entry name" value="Chaprnonin_Cpn10_CS"/>
</dbReference>
<dbReference type="InterPro" id="IPR011032">
    <property type="entry name" value="GroES-like_sf"/>
</dbReference>
<dbReference type="NCBIfam" id="NF001530">
    <property type="entry name" value="PRK00364.1-6"/>
    <property type="match status" value="1"/>
</dbReference>
<dbReference type="NCBIfam" id="NF001531">
    <property type="entry name" value="PRK00364.2-2"/>
    <property type="match status" value="1"/>
</dbReference>
<dbReference type="NCBIfam" id="NF001533">
    <property type="entry name" value="PRK00364.2-4"/>
    <property type="match status" value="1"/>
</dbReference>
<dbReference type="NCBIfam" id="NF001534">
    <property type="entry name" value="PRK00364.2-5"/>
    <property type="match status" value="1"/>
</dbReference>
<dbReference type="PANTHER" id="PTHR10772">
    <property type="entry name" value="10 KDA HEAT SHOCK PROTEIN"/>
    <property type="match status" value="1"/>
</dbReference>
<dbReference type="PANTHER" id="PTHR10772:SF58">
    <property type="entry name" value="CO-CHAPERONIN GROES"/>
    <property type="match status" value="1"/>
</dbReference>
<dbReference type="Pfam" id="PF00166">
    <property type="entry name" value="Cpn10"/>
    <property type="match status" value="1"/>
</dbReference>
<dbReference type="PRINTS" id="PR00297">
    <property type="entry name" value="CHAPERONIN10"/>
</dbReference>
<dbReference type="SMART" id="SM00883">
    <property type="entry name" value="Cpn10"/>
    <property type="match status" value="1"/>
</dbReference>
<dbReference type="SUPFAM" id="SSF50129">
    <property type="entry name" value="GroES-like"/>
    <property type="match status" value="1"/>
</dbReference>
<dbReference type="PROSITE" id="PS00681">
    <property type="entry name" value="CHAPERONINS_CPN10"/>
    <property type="match status" value="1"/>
</dbReference>
<feature type="chain" id="PRO_0000174856" description="Co-chaperonin GroES">
    <location>
        <begin position="1"/>
        <end position="102"/>
    </location>
</feature>
<gene>
    <name evidence="1" type="primary">groES</name>
    <name evidence="1" type="synonym">groS</name>
    <name type="ordered locus">SAV_4991</name>
</gene>
<reference key="1">
    <citation type="journal article" date="2001" name="Proc. Natl. Acad. Sci. U.S.A.">
        <title>Genome sequence of an industrial microorganism Streptomyces avermitilis: deducing the ability of producing secondary metabolites.</title>
        <authorList>
            <person name="Omura S."/>
            <person name="Ikeda H."/>
            <person name="Ishikawa J."/>
            <person name="Hanamoto A."/>
            <person name="Takahashi C."/>
            <person name="Shinose M."/>
            <person name="Takahashi Y."/>
            <person name="Horikawa H."/>
            <person name="Nakazawa H."/>
            <person name="Osonoe T."/>
            <person name="Kikuchi H."/>
            <person name="Shiba T."/>
            <person name="Sakaki Y."/>
            <person name="Hattori M."/>
        </authorList>
    </citation>
    <scope>NUCLEOTIDE SEQUENCE [LARGE SCALE GENOMIC DNA]</scope>
    <source>
        <strain>ATCC 31267 / DSM 46492 / JCM 5070 / NBRC 14893 / NCIMB 12804 / NRRL 8165 / MA-4680</strain>
    </source>
</reference>
<reference key="2">
    <citation type="journal article" date="2003" name="Nat. Biotechnol.">
        <title>Complete genome sequence and comparative analysis of the industrial microorganism Streptomyces avermitilis.</title>
        <authorList>
            <person name="Ikeda H."/>
            <person name="Ishikawa J."/>
            <person name="Hanamoto A."/>
            <person name="Shinose M."/>
            <person name="Kikuchi H."/>
            <person name="Shiba T."/>
            <person name="Sakaki Y."/>
            <person name="Hattori M."/>
            <person name="Omura S."/>
        </authorList>
    </citation>
    <scope>NUCLEOTIDE SEQUENCE [LARGE SCALE GENOMIC DNA]</scope>
    <source>
        <strain>ATCC 31267 / DSM 46492 / JCM 5070 / NBRC 14893 / NCIMB 12804 / NRRL 8165 / MA-4680</strain>
    </source>
</reference>
<organism>
    <name type="scientific">Streptomyces avermitilis (strain ATCC 31267 / DSM 46492 / JCM 5070 / NBRC 14893 / NCIMB 12804 / NRRL 8165 / MA-4680)</name>
    <dbReference type="NCBI Taxonomy" id="227882"/>
    <lineage>
        <taxon>Bacteria</taxon>
        <taxon>Bacillati</taxon>
        <taxon>Actinomycetota</taxon>
        <taxon>Actinomycetes</taxon>
        <taxon>Kitasatosporales</taxon>
        <taxon>Streptomycetaceae</taxon>
        <taxon>Streptomyces</taxon>
    </lineage>
</organism>
<sequence length="102" mass="10930">MTTASSKVAIKPLEDRIVVQPLDAEQTTASGLVIPDTAKEKPQEGVVLAVGPGRFEDGNRLPLDVTVGDVVLYSKYGGTEVKYNGEEYLVLSARDVLAIVEK</sequence>
<proteinExistence type="inferred from homology"/>
<keyword id="KW-0143">Chaperone</keyword>
<keyword id="KW-0963">Cytoplasm</keyword>
<keyword id="KW-1185">Reference proteome</keyword>
<name>CH10_STRAW</name>